<protein>
    <recommendedName>
        <fullName>1-aminocyclopropane-1-carboxylate oxidase</fullName>
        <shortName>ACC oxidase</shortName>
        <ecNumber>1.14.17.4</ecNumber>
    </recommendedName>
    <alternativeName>
        <fullName>Ethylene-forming enzyme</fullName>
        <shortName>EFE</shortName>
    </alternativeName>
</protein>
<keyword id="KW-0266">Ethylene biosynthesis</keyword>
<keyword id="KW-0292">Fruit ripening</keyword>
<keyword id="KW-0408">Iron</keyword>
<keyword id="KW-0479">Metal-binding</keyword>
<keyword id="KW-0560">Oxidoreductase</keyword>
<keyword id="KW-0847">Vitamin C</keyword>
<sequence>MEKNIKFPVVDLSKLIGEERDQTMALINDACENWGFFEIVNHGLPHDLMDNAEKMTKEHYKISMEQKFNDMLKSKGLENLEREVEDVDWESTFYLRHLPQSNLYDIPDMSDEYRTAMKDFGKRLENLAEDLLDLLCENLGLEKGYLKKVFHGTKGPTFGTKVSNYPACPKPEMIKGLRAHTDAGGIILLFQDDKVTGLQLLKDGDWIDVPPLNHSIVINLGDQLEVITNGRYKSMMHRVVTQKEGNRMSIASFYNPGSDAEISPASSLACKETEYPSFVFDDYMKLYAGVKFQPKEPRFEAMKNANAVTELNPTAAVETF</sequence>
<name>ACCO1_BRAJU</name>
<accession>Q09052</accession>
<organism>
    <name type="scientific">Brassica juncea</name>
    <name type="common">Indian mustard</name>
    <name type="synonym">Sinapis juncea</name>
    <dbReference type="NCBI Taxonomy" id="3707"/>
    <lineage>
        <taxon>Eukaryota</taxon>
        <taxon>Viridiplantae</taxon>
        <taxon>Streptophyta</taxon>
        <taxon>Embryophyta</taxon>
        <taxon>Tracheophyta</taxon>
        <taxon>Spermatophyta</taxon>
        <taxon>Magnoliopsida</taxon>
        <taxon>eudicotyledons</taxon>
        <taxon>Gunneridae</taxon>
        <taxon>Pentapetalae</taxon>
        <taxon>rosids</taxon>
        <taxon>malvids</taxon>
        <taxon>Brassicales</taxon>
        <taxon>Brassicaceae</taxon>
        <taxon>Brassiceae</taxon>
        <taxon>Brassica</taxon>
    </lineage>
</organism>
<comment type="catalytic activity">
    <reaction>
        <text>1-aminocyclopropane-1-carboxylate + L-ascorbate + O2 = ethene + L-dehydroascorbate + hydrogen cyanide + CO2 + 2 H2O</text>
        <dbReference type="Rhea" id="RHEA:23640"/>
        <dbReference type="ChEBI" id="CHEBI:15377"/>
        <dbReference type="ChEBI" id="CHEBI:15379"/>
        <dbReference type="ChEBI" id="CHEBI:16526"/>
        <dbReference type="ChEBI" id="CHEBI:18153"/>
        <dbReference type="ChEBI" id="CHEBI:18407"/>
        <dbReference type="ChEBI" id="CHEBI:38290"/>
        <dbReference type="ChEBI" id="CHEBI:58360"/>
        <dbReference type="ChEBI" id="CHEBI:58539"/>
        <dbReference type="EC" id="1.14.17.4"/>
    </reaction>
</comment>
<comment type="cofactor">
    <cofactor>
        <name>Fe cation</name>
        <dbReference type="ChEBI" id="CHEBI:24875"/>
    </cofactor>
</comment>
<comment type="pathway">
    <text>Alkene biosynthesis; ethylene biosynthesis via S-adenosyl-L-methionine; ethylene from S-adenosyl-L-methionine: step 2/2.</text>
</comment>
<comment type="similarity">
    <text evidence="2">Belongs to the iron/ascorbate-dependent oxidoreductase family.</text>
</comment>
<dbReference type="EC" id="1.14.17.4"/>
<dbReference type="EMBL" id="Z11750">
    <property type="protein sequence ID" value="CAA77807.1"/>
    <property type="molecule type" value="mRNA"/>
</dbReference>
<dbReference type="PIR" id="S22488">
    <property type="entry name" value="S22488"/>
</dbReference>
<dbReference type="SMR" id="Q09052"/>
<dbReference type="UniPathway" id="UPA00384">
    <property type="reaction ID" value="UER00563"/>
</dbReference>
<dbReference type="GO" id="GO:0009815">
    <property type="term" value="F:1-aminocyclopropane-1-carboxylate oxidase activity"/>
    <property type="evidence" value="ECO:0007669"/>
    <property type="project" value="UniProtKB-EC"/>
</dbReference>
<dbReference type="GO" id="GO:0031418">
    <property type="term" value="F:L-ascorbic acid binding"/>
    <property type="evidence" value="ECO:0007669"/>
    <property type="project" value="UniProtKB-KW"/>
</dbReference>
<dbReference type="GO" id="GO:0046872">
    <property type="term" value="F:metal ion binding"/>
    <property type="evidence" value="ECO:0007669"/>
    <property type="project" value="UniProtKB-KW"/>
</dbReference>
<dbReference type="GO" id="GO:0009693">
    <property type="term" value="P:ethylene biosynthetic process"/>
    <property type="evidence" value="ECO:0007669"/>
    <property type="project" value="UniProtKB-UniPathway"/>
</dbReference>
<dbReference type="GO" id="GO:0009835">
    <property type="term" value="P:fruit ripening"/>
    <property type="evidence" value="ECO:0007669"/>
    <property type="project" value="UniProtKB-KW"/>
</dbReference>
<dbReference type="FunFam" id="2.60.120.330:FF:000002">
    <property type="entry name" value="1-aminocyclopropane-1-carboxylate oxidase 1"/>
    <property type="match status" value="1"/>
</dbReference>
<dbReference type="Gene3D" id="2.60.120.330">
    <property type="entry name" value="B-lactam Antibiotic, Isopenicillin N Synthase, Chain"/>
    <property type="match status" value="1"/>
</dbReference>
<dbReference type="InterPro" id="IPR026992">
    <property type="entry name" value="DIOX_N"/>
</dbReference>
<dbReference type="InterPro" id="IPR044861">
    <property type="entry name" value="IPNS-like_FE2OG_OXY"/>
</dbReference>
<dbReference type="InterPro" id="IPR027443">
    <property type="entry name" value="IPNS-like_sf"/>
</dbReference>
<dbReference type="InterPro" id="IPR005123">
    <property type="entry name" value="Oxoglu/Fe-dep_dioxygenase_dom"/>
</dbReference>
<dbReference type="InterPro" id="IPR050295">
    <property type="entry name" value="Plant_2OG-oxidoreductases"/>
</dbReference>
<dbReference type="PANTHER" id="PTHR47991">
    <property type="entry name" value="OXOGLUTARATE/IRON-DEPENDENT DIOXYGENASE"/>
    <property type="match status" value="1"/>
</dbReference>
<dbReference type="Pfam" id="PF03171">
    <property type="entry name" value="2OG-FeII_Oxy"/>
    <property type="match status" value="1"/>
</dbReference>
<dbReference type="Pfam" id="PF14226">
    <property type="entry name" value="DIOX_N"/>
    <property type="match status" value="1"/>
</dbReference>
<dbReference type="SUPFAM" id="SSF51197">
    <property type="entry name" value="Clavaminate synthase-like"/>
    <property type="match status" value="1"/>
</dbReference>
<dbReference type="PROSITE" id="PS51471">
    <property type="entry name" value="FE2OG_OXY"/>
    <property type="match status" value="1"/>
</dbReference>
<evidence type="ECO:0000255" key="1">
    <source>
        <dbReference type="PROSITE-ProRule" id="PRU00805"/>
    </source>
</evidence>
<evidence type="ECO:0000305" key="2"/>
<gene>
    <name type="primary">ACO</name>
</gene>
<feature type="chain" id="PRO_0000067253" description="1-aminocyclopropane-1-carboxylate oxidase">
    <location>
        <begin position="1"/>
        <end position="320"/>
    </location>
</feature>
<feature type="domain" description="Fe2OG dioxygenase" evidence="1">
    <location>
        <begin position="156"/>
        <end position="256"/>
    </location>
</feature>
<feature type="binding site" evidence="1">
    <location>
        <position position="180"/>
    </location>
    <ligand>
        <name>Fe cation</name>
        <dbReference type="ChEBI" id="CHEBI:24875"/>
    </ligand>
</feature>
<feature type="binding site" evidence="1">
    <location>
        <position position="182"/>
    </location>
    <ligand>
        <name>Fe cation</name>
        <dbReference type="ChEBI" id="CHEBI:24875"/>
    </ligand>
</feature>
<feature type="binding site" evidence="1">
    <location>
        <position position="237"/>
    </location>
    <ligand>
        <name>Fe cation</name>
        <dbReference type="ChEBI" id="CHEBI:24875"/>
    </ligand>
</feature>
<proteinExistence type="evidence at transcript level"/>
<reference key="1">
    <citation type="journal article" date="1992" name="Plant Mol. Biol.">
        <title>Isolation and sequence analysis of a cDNA clone encoding ethylene-forming enzyme in Brassica juncea (L.) Czern &amp; Coss.</title>
        <authorList>
            <person name="Pua E.-C."/>
            <person name="Sim G.-E."/>
            <person name="Chye M.-L."/>
        </authorList>
    </citation>
    <scope>NUCLEOTIDE SEQUENCE [MRNA]</scope>
</reference>